<keyword id="KW-0131">Cell cycle</keyword>
<keyword id="KW-0132">Cell division</keyword>
<keyword id="KW-0133">Cell shape</keyword>
<keyword id="KW-0961">Cell wall biogenesis/degradation</keyword>
<keyword id="KW-0963">Cytoplasm</keyword>
<keyword id="KW-0274">FAD</keyword>
<keyword id="KW-0285">Flavoprotein</keyword>
<keyword id="KW-0521">NADP</keyword>
<keyword id="KW-0560">Oxidoreductase</keyword>
<keyword id="KW-0573">Peptidoglycan synthesis</keyword>
<dbReference type="EC" id="1.3.1.98" evidence="1"/>
<dbReference type="EMBL" id="CP000024">
    <property type="protein sequence ID" value="AAV63069.1"/>
    <property type="status" value="ALT_INIT"/>
    <property type="molecule type" value="Genomic_DNA"/>
</dbReference>
<dbReference type="SMR" id="Q5LYN3"/>
<dbReference type="KEGG" id="stc:str1539"/>
<dbReference type="HOGENOM" id="CLU_035304_1_1_9"/>
<dbReference type="UniPathway" id="UPA00219"/>
<dbReference type="GO" id="GO:0005829">
    <property type="term" value="C:cytosol"/>
    <property type="evidence" value="ECO:0007669"/>
    <property type="project" value="TreeGrafter"/>
</dbReference>
<dbReference type="GO" id="GO:0071949">
    <property type="term" value="F:FAD binding"/>
    <property type="evidence" value="ECO:0007669"/>
    <property type="project" value="InterPro"/>
</dbReference>
<dbReference type="GO" id="GO:0008762">
    <property type="term" value="F:UDP-N-acetylmuramate dehydrogenase activity"/>
    <property type="evidence" value="ECO:0007669"/>
    <property type="project" value="UniProtKB-UniRule"/>
</dbReference>
<dbReference type="GO" id="GO:0051301">
    <property type="term" value="P:cell division"/>
    <property type="evidence" value="ECO:0007669"/>
    <property type="project" value="UniProtKB-KW"/>
</dbReference>
<dbReference type="GO" id="GO:0071555">
    <property type="term" value="P:cell wall organization"/>
    <property type="evidence" value="ECO:0007669"/>
    <property type="project" value="UniProtKB-KW"/>
</dbReference>
<dbReference type="GO" id="GO:0009252">
    <property type="term" value="P:peptidoglycan biosynthetic process"/>
    <property type="evidence" value="ECO:0007669"/>
    <property type="project" value="UniProtKB-UniRule"/>
</dbReference>
<dbReference type="GO" id="GO:0008360">
    <property type="term" value="P:regulation of cell shape"/>
    <property type="evidence" value="ECO:0007669"/>
    <property type="project" value="UniProtKB-KW"/>
</dbReference>
<dbReference type="Gene3D" id="3.30.465.10">
    <property type="match status" value="1"/>
</dbReference>
<dbReference type="Gene3D" id="3.90.78.10">
    <property type="entry name" value="UDP-N-acetylenolpyruvoylglucosamine reductase, C-terminal domain"/>
    <property type="match status" value="1"/>
</dbReference>
<dbReference type="Gene3D" id="3.30.43.10">
    <property type="entry name" value="Uridine Diphospho-n-acetylenolpyruvylglucosamine Reductase, domain 2"/>
    <property type="match status" value="1"/>
</dbReference>
<dbReference type="HAMAP" id="MF_00037">
    <property type="entry name" value="MurB"/>
    <property type="match status" value="1"/>
</dbReference>
<dbReference type="InterPro" id="IPR016166">
    <property type="entry name" value="FAD-bd_PCMH"/>
</dbReference>
<dbReference type="InterPro" id="IPR036318">
    <property type="entry name" value="FAD-bd_PCMH-like_sf"/>
</dbReference>
<dbReference type="InterPro" id="IPR016167">
    <property type="entry name" value="FAD-bd_PCMH_sub1"/>
</dbReference>
<dbReference type="InterPro" id="IPR016169">
    <property type="entry name" value="FAD-bd_PCMH_sub2"/>
</dbReference>
<dbReference type="InterPro" id="IPR003170">
    <property type="entry name" value="MurB"/>
</dbReference>
<dbReference type="InterPro" id="IPR011601">
    <property type="entry name" value="MurB_C"/>
</dbReference>
<dbReference type="InterPro" id="IPR036635">
    <property type="entry name" value="MurB_C_sf"/>
</dbReference>
<dbReference type="InterPro" id="IPR006094">
    <property type="entry name" value="Oxid_FAD_bind_N"/>
</dbReference>
<dbReference type="NCBIfam" id="TIGR00179">
    <property type="entry name" value="murB"/>
    <property type="match status" value="1"/>
</dbReference>
<dbReference type="NCBIfam" id="NF010480">
    <property type="entry name" value="PRK13905.1"/>
    <property type="match status" value="1"/>
</dbReference>
<dbReference type="PANTHER" id="PTHR21071">
    <property type="entry name" value="UDP-N-ACETYLENOLPYRUVOYLGLUCOSAMINE REDUCTASE"/>
    <property type="match status" value="1"/>
</dbReference>
<dbReference type="PANTHER" id="PTHR21071:SF4">
    <property type="entry name" value="UDP-N-ACETYLENOLPYRUVOYLGLUCOSAMINE REDUCTASE"/>
    <property type="match status" value="1"/>
</dbReference>
<dbReference type="Pfam" id="PF01565">
    <property type="entry name" value="FAD_binding_4"/>
    <property type="match status" value="1"/>
</dbReference>
<dbReference type="Pfam" id="PF02873">
    <property type="entry name" value="MurB_C"/>
    <property type="match status" value="1"/>
</dbReference>
<dbReference type="SUPFAM" id="SSF56176">
    <property type="entry name" value="FAD-binding/transporter-associated domain-like"/>
    <property type="match status" value="1"/>
</dbReference>
<dbReference type="SUPFAM" id="SSF56194">
    <property type="entry name" value="Uridine diphospho-N-Acetylenolpyruvylglucosamine reductase, MurB, C-terminal domain"/>
    <property type="match status" value="1"/>
</dbReference>
<dbReference type="PROSITE" id="PS51387">
    <property type="entry name" value="FAD_PCMH"/>
    <property type="match status" value="1"/>
</dbReference>
<sequence length="304" mass="33516">MGINMLDELKEDLVGIDIRFDEPLKRYTYTKVGGPADYLAFPRNRYELFRIVKFANKHNIPWMVLGNASNLIVRDGGIRGFVIMFDKLNGIAVNGYQVEAEAGANLIATTKVACFHSLTGFEFAAGIPGSIGGAVFMNAGAYGGEIAHILVSAQVLTKDGDIRTIDARDMRFGYRRSVLQETGEVVISAKFNLKPGDYEQIKHEMNRLNHLRELKQPLEYPSCGSVFKRPPGHFAGQLIMEANLEGHRIGGVEVSTKHAGFMVNVDQGTAKDYEDLIADVIAKVKENSGVTLEPEVRIIGDKLN</sequence>
<feature type="chain" id="PRO_0000224727" description="UDP-N-acetylenolpyruvoylglucosamine reductase">
    <location>
        <begin position="1"/>
        <end position="304"/>
    </location>
</feature>
<feature type="domain" description="FAD-binding PCMH-type" evidence="1">
    <location>
        <begin position="31"/>
        <end position="196"/>
    </location>
</feature>
<feature type="active site" evidence="1">
    <location>
        <position position="175"/>
    </location>
</feature>
<feature type="active site" description="Proton donor" evidence="1">
    <location>
        <position position="225"/>
    </location>
</feature>
<feature type="active site" evidence="1">
    <location>
        <position position="295"/>
    </location>
</feature>
<proteinExistence type="inferred from homology"/>
<protein>
    <recommendedName>
        <fullName evidence="1">UDP-N-acetylenolpyruvoylglucosamine reductase</fullName>
        <ecNumber evidence="1">1.3.1.98</ecNumber>
    </recommendedName>
    <alternativeName>
        <fullName evidence="1">UDP-N-acetylmuramate dehydrogenase</fullName>
    </alternativeName>
</protein>
<evidence type="ECO:0000255" key="1">
    <source>
        <dbReference type="HAMAP-Rule" id="MF_00037"/>
    </source>
</evidence>
<evidence type="ECO:0000305" key="2"/>
<gene>
    <name evidence="1" type="primary">murB</name>
    <name type="ordered locus">str1539</name>
</gene>
<comment type="function">
    <text evidence="1">Cell wall formation.</text>
</comment>
<comment type="catalytic activity">
    <reaction evidence="1">
        <text>UDP-N-acetyl-alpha-D-muramate + NADP(+) = UDP-N-acetyl-3-O-(1-carboxyvinyl)-alpha-D-glucosamine + NADPH + H(+)</text>
        <dbReference type="Rhea" id="RHEA:12248"/>
        <dbReference type="ChEBI" id="CHEBI:15378"/>
        <dbReference type="ChEBI" id="CHEBI:57783"/>
        <dbReference type="ChEBI" id="CHEBI:58349"/>
        <dbReference type="ChEBI" id="CHEBI:68483"/>
        <dbReference type="ChEBI" id="CHEBI:70757"/>
        <dbReference type="EC" id="1.3.1.98"/>
    </reaction>
</comment>
<comment type="cofactor">
    <cofactor evidence="1">
        <name>FAD</name>
        <dbReference type="ChEBI" id="CHEBI:57692"/>
    </cofactor>
</comment>
<comment type="pathway">
    <text evidence="1">Cell wall biogenesis; peptidoglycan biosynthesis.</text>
</comment>
<comment type="subcellular location">
    <subcellularLocation>
        <location evidence="1">Cytoplasm</location>
    </subcellularLocation>
</comment>
<comment type="similarity">
    <text evidence="1">Belongs to the MurB family.</text>
</comment>
<comment type="sequence caution" evidence="2">
    <conflict type="erroneous initiation">
        <sequence resource="EMBL-CDS" id="AAV63069"/>
    </conflict>
</comment>
<reference key="1">
    <citation type="journal article" date="2004" name="Nat. Biotechnol.">
        <title>Complete sequence and comparative genome analysis of the dairy bacterium Streptococcus thermophilus.</title>
        <authorList>
            <person name="Bolotin A."/>
            <person name="Quinquis B."/>
            <person name="Renault P."/>
            <person name="Sorokin A."/>
            <person name="Ehrlich S.D."/>
            <person name="Kulakauskas S."/>
            <person name="Lapidus A."/>
            <person name="Goltsman E."/>
            <person name="Mazur M."/>
            <person name="Pusch G.D."/>
            <person name="Fonstein M."/>
            <person name="Overbeek R."/>
            <person name="Kyprides N."/>
            <person name="Purnelle B."/>
            <person name="Prozzi D."/>
            <person name="Ngui K."/>
            <person name="Masuy D."/>
            <person name="Hancy F."/>
            <person name="Burteau S."/>
            <person name="Boutry M."/>
            <person name="Delcour J."/>
            <person name="Goffeau A."/>
            <person name="Hols P."/>
        </authorList>
    </citation>
    <scope>NUCLEOTIDE SEQUENCE [LARGE SCALE GENOMIC DNA]</scope>
    <source>
        <strain>CNRZ 1066</strain>
    </source>
</reference>
<accession>Q5LYN3</accession>
<name>MURB_STRT1</name>
<organism>
    <name type="scientific">Streptococcus thermophilus (strain CNRZ 1066)</name>
    <dbReference type="NCBI Taxonomy" id="299768"/>
    <lineage>
        <taxon>Bacteria</taxon>
        <taxon>Bacillati</taxon>
        <taxon>Bacillota</taxon>
        <taxon>Bacilli</taxon>
        <taxon>Lactobacillales</taxon>
        <taxon>Streptococcaceae</taxon>
        <taxon>Streptococcus</taxon>
    </lineage>
</organism>